<evidence type="ECO:0000250" key="1"/>
<evidence type="ECO:0000256" key="2">
    <source>
        <dbReference type="SAM" id="MobiDB-lite"/>
    </source>
</evidence>
<evidence type="ECO:0000305" key="3"/>
<dbReference type="EC" id="3.1.22.-"/>
<dbReference type="EMBL" id="DS231663">
    <property type="protein sequence ID" value="ESU06414.1"/>
    <property type="molecule type" value="Genomic_DNA"/>
</dbReference>
<dbReference type="EMBL" id="HG970332">
    <property type="protein sequence ID" value="CEF73209.1"/>
    <property type="molecule type" value="Genomic_DNA"/>
</dbReference>
<dbReference type="RefSeq" id="XP_011316899.1">
    <property type="nucleotide sequence ID" value="XM_011318597.1"/>
</dbReference>
<dbReference type="SMR" id="Q4INS6"/>
<dbReference type="FunCoup" id="Q4INS6">
    <property type="interactions" value="198"/>
</dbReference>
<dbReference type="STRING" id="229533.Q4INS6"/>
<dbReference type="GeneID" id="23548581"/>
<dbReference type="KEGG" id="fgr:FGSG_01132"/>
<dbReference type="VEuPathDB" id="FungiDB:FGRAMPH1_01G02815"/>
<dbReference type="eggNOG" id="KOG2379">
    <property type="taxonomic scope" value="Eukaryota"/>
</dbReference>
<dbReference type="HOGENOM" id="CLU_014329_1_0_1"/>
<dbReference type="InParanoid" id="Q4INS6"/>
<dbReference type="OrthoDB" id="42771at110618"/>
<dbReference type="Proteomes" id="UP000070720">
    <property type="component" value="Chromosome 1"/>
</dbReference>
<dbReference type="GO" id="GO:0048476">
    <property type="term" value="C:Holliday junction resolvase complex"/>
    <property type="evidence" value="ECO:0007669"/>
    <property type="project" value="TreeGrafter"/>
</dbReference>
<dbReference type="GO" id="GO:0005634">
    <property type="term" value="C:nucleus"/>
    <property type="evidence" value="ECO:0007669"/>
    <property type="project" value="UniProtKB-SubCell"/>
</dbReference>
<dbReference type="GO" id="GO:0048257">
    <property type="term" value="F:3'-flap endonuclease activity"/>
    <property type="evidence" value="ECO:0007669"/>
    <property type="project" value="TreeGrafter"/>
</dbReference>
<dbReference type="GO" id="GO:0008821">
    <property type="term" value="F:crossover junction DNA endonuclease activity"/>
    <property type="evidence" value="ECO:0007669"/>
    <property type="project" value="InterPro"/>
</dbReference>
<dbReference type="GO" id="GO:0003677">
    <property type="term" value="F:DNA binding"/>
    <property type="evidence" value="ECO:0007669"/>
    <property type="project" value="InterPro"/>
</dbReference>
<dbReference type="GO" id="GO:0046872">
    <property type="term" value="F:metal ion binding"/>
    <property type="evidence" value="ECO:0007669"/>
    <property type="project" value="UniProtKB-KW"/>
</dbReference>
<dbReference type="GO" id="GO:0006308">
    <property type="term" value="P:DNA catabolic process"/>
    <property type="evidence" value="ECO:0007669"/>
    <property type="project" value="InterPro"/>
</dbReference>
<dbReference type="GO" id="GO:0000727">
    <property type="term" value="P:double-strand break repair via break-induced replication"/>
    <property type="evidence" value="ECO:0007669"/>
    <property type="project" value="TreeGrafter"/>
</dbReference>
<dbReference type="GO" id="GO:0031573">
    <property type="term" value="P:mitotic intra-S DNA damage checkpoint signaling"/>
    <property type="evidence" value="ECO:0007669"/>
    <property type="project" value="TreeGrafter"/>
</dbReference>
<dbReference type="GO" id="GO:0000712">
    <property type="term" value="P:resolution of meiotic recombination intermediates"/>
    <property type="evidence" value="ECO:0007669"/>
    <property type="project" value="TreeGrafter"/>
</dbReference>
<dbReference type="CDD" id="cd21036">
    <property type="entry name" value="WH_MUS81"/>
    <property type="match status" value="1"/>
</dbReference>
<dbReference type="CDD" id="cd20074">
    <property type="entry name" value="XPF_nuclease_Mus81"/>
    <property type="match status" value="1"/>
</dbReference>
<dbReference type="FunFam" id="1.10.10.10:FF:000307">
    <property type="entry name" value="Crossover junction endonuclease MUS81"/>
    <property type="match status" value="1"/>
</dbReference>
<dbReference type="FunFam" id="3.40.50.10130:FF:000003">
    <property type="entry name" value="Crossover junction endonuclease MUS81"/>
    <property type="match status" value="1"/>
</dbReference>
<dbReference type="FunFam" id="1.10.150.110:FF:000001">
    <property type="entry name" value="Putative Crossover junction endonuclease MUS81"/>
    <property type="match status" value="1"/>
</dbReference>
<dbReference type="Gene3D" id="3.40.50.10130">
    <property type="match status" value="1"/>
</dbReference>
<dbReference type="Gene3D" id="1.10.150.670">
    <property type="entry name" value="Crossover junction endonuclease EME1, DNA-binding domain"/>
    <property type="match status" value="1"/>
</dbReference>
<dbReference type="Gene3D" id="1.10.150.110">
    <property type="entry name" value="DNA polymerase beta, N-terminal domain-like"/>
    <property type="match status" value="1"/>
</dbReference>
<dbReference type="Gene3D" id="1.10.10.10">
    <property type="entry name" value="Winged helix-like DNA-binding domain superfamily/Winged helix DNA-binding domain"/>
    <property type="match status" value="1"/>
</dbReference>
<dbReference type="InterPro" id="IPR027421">
    <property type="entry name" value="DNA_pol_lamdba_lyase_dom_sf"/>
</dbReference>
<dbReference type="InterPro" id="IPR042530">
    <property type="entry name" value="EME1/EME2_C"/>
</dbReference>
<dbReference type="InterPro" id="IPR006166">
    <property type="entry name" value="ERCC4_domain"/>
</dbReference>
<dbReference type="InterPro" id="IPR033309">
    <property type="entry name" value="Mus81"/>
</dbReference>
<dbReference type="InterPro" id="IPR011335">
    <property type="entry name" value="Restrct_endonuc-II-like"/>
</dbReference>
<dbReference type="InterPro" id="IPR036388">
    <property type="entry name" value="WH-like_DNA-bd_sf"/>
</dbReference>
<dbReference type="InterPro" id="IPR047417">
    <property type="entry name" value="WH_MUS81"/>
</dbReference>
<dbReference type="InterPro" id="IPR047416">
    <property type="entry name" value="XPF_nuclease_Mus81"/>
</dbReference>
<dbReference type="PANTHER" id="PTHR13451">
    <property type="entry name" value="CLASS II CROSSOVER JUNCTION ENDONUCLEASE MUS81"/>
    <property type="match status" value="1"/>
</dbReference>
<dbReference type="PANTHER" id="PTHR13451:SF0">
    <property type="entry name" value="CROSSOVER JUNCTION ENDONUCLEASE MUS81"/>
    <property type="match status" value="1"/>
</dbReference>
<dbReference type="Pfam" id="PF02732">
    <property type="entry name" value="ERCC4"/>
    <property type="match status" value="1"/>
</dbReference>
<dbReference type="Pfam" id="PF21136">
    <property type="entry name" value="MUS81-like_WH"/>
    <property type="match status" value="1"/>
</dbReference>
<dbReference type="SMART" id="SM00891">
    <property type="entry name" value="ERCC4"/>
    <property type="match status" value="1"/>
</dbReference>
<dbReference type="SUPFAM" id="SSF47802">
    <property type="entry name" value="DNA polymerase beta, N-terminal domain-like"/>
    <property type="match status" value="1"/>
</dbReference>
<dbReference type="SUPFAM" id="SSF52980">
    <property type="entry name" value="Restriction endonuclease-like"/>
    <property type="match status" value="1"/>
</dbReference>
<feature type="chain" id="PRO_0000223644" description="Crossover junction endonuclease MUS81">
    <location>
        <begin position="1"/>
        <end position="581"/>
    </location>
</feature>
<feature type="domain" description="ERCC4">
    <location>
        <begin position="290"/>
        <end position="396"/>
    </location>
</feature>
<feature type="region of interest" description="Disordered" evidence="2">
    <location>
        <begin position="76"/>
        <end position="113"/>
    </location>
</feature>
<keyword id="KW-0227">DNA damage</keyword>
<keyword id="KW-0233">DNA recombination</keyword>
<keyword id="KW-0234">DNA repair</keyword>
<keyword id="KW-0255">Endonuclease</keyword>
<keyword id="KW-0378">Hydrolase</keyword>
<keyword id="KW-0460">Magnesium</keyword>
<keyword id="KW-0469">Meiosis</keyword>
<keyword id="KW-0479">Metal-binding</keyword>
<keyword id="KW-0540">Nuclease</keyword>
<keyword id="KW-0539">Nucleus</keyword>
<keyword id="KW-1185">Reference proteome</keyword>
<comment type="function">
    <text evidence="1">Interacts with EME1 to form a DNA structure-specific endonuclease with substrate preference for branched DNA structures with a 5'-end at the branch nick. Typical substrates include 3'-flap structures, D-loops, replication forks and nicked Holliday junctions. May be required in mitosis for the processing of stalled or collapsed replication fork intermediates. May be required in meiosis for the repair of meiosis-specific double strand breaks subsequent to single-end invasion (SEI) (By similarity).</text>
</comment>
<comment type="cofactor">
    <cofactor evidence="1">
        <name>Mg(2+)</name>
        <dbReference type="ChEBI" id="CHEBI:18420"/>
    </cofactor>
</comment>
<comment type="subunit">
    <text evidence="1">Interacts with EME1.</text>
</comment>
<comment type="subcellular location">
    <subcellularLocation>
        <location evidence="1">Nucleus</location>
    </subcellularLocation>
</comment>
<comment type="similarity">
    <text evidence="3">Belongs to the XPF family.</text>
</comment>
<sequence>MADADSANPQFLEWVKEWLDLARERNSKGVTTYRTAYNSLKACPISFEHPAQLQQLKGFGPKLCERLEQQLKKHCEQNGLPMPPHPRSRKAAPVTSDENGEGSSKPAKKARKQKAYVPALRSGAFALVVGLSTLDEDTATGMTKAELIEVAQPYCDASFSAPSDPTKFYTAWNSMKTLLQKELVYERGRPLRRYALTDEGWEVAKRIKDTDHWQAEKDRTKDPTSAQPVIPNFQPGAISRQKSPSVEIAEPAQALSEYQNVVADGLTTSDDASLPNFTPILLPPGTFTVQLVLDVREVRAKTDRDYMQEELAKQGAKPIMRSMELGDAQWVAKCNDPNLLSSQGAEGDEVVLDWIVERKRLDDLIGSIKDGRFHEQKFRLQRSGVKKVIYIIEEIGMDPEVINRYAEAVRSAIASTQVVNGYFVKRTNKMDDTIRYLTRMTAMLKRTYESRSLHVIPTKVLTSQNYLPLLKHLRESISPDWYITYPAFSSLASKSESITLRDVFLKMLMTIKGVTGEKALEIQKCWKTPYDFVKAFEACGPGEQGLKRKRELVFSQTSHLVGRKKFTKPLSTKIAEVWGNT</sequence>
<proteinExistence type="inferred from homology"/>
<organism>
    <name type="scientific">Gibberella zeae (strain ATCC MYA-4620 / CBS 123657 / FGSC 9075 / NRRL 31084 / PH-1)</name>
    <name type="common">Wheat head blight fungus</name>
    <name type="synonym">Fusarium graminearum</name>
    <dbReference type="NCBI Taxonomy" id="229533"/>
    <lineage>
        <taxon>Eukaryota</taxon>
        <taxon>Fungi</taxon>
        <taxon>Dikarya</taxon>
        <taxon>Ascomycota</taxon>
        <taxon>Pezizomycotina</taxon>
        <taxon>Sordariomycetes</taxon>
        <taxon>Hypocreomycetidae</taxon>
        <taxon>Hypocreales</taxon>
        <taxon>Nectriaceae</taxon>
        <taxon>Fusarium</taxon>
    </lineage>
</organism>
<accession>Q4INS6</accession>
<accession>A0A098D2M7</accession>
<accession>A0A0E0RPN4</accession>
<accession>V6QWS8</accession>
<reference key="1">
    <citation type="journal article" date="2007" name="Science">
        <title>The Fusarium graminearum genome reveals a link between localized polymorphism and pathogen specialization.</title>
        <authorList>
            <person name="Cuomo C.A."/>
            <person name="Gueldener U."/>
            <person name="Xu J.-R."/>
            <person name="Trail F."/>
            <person name="Turgeon B.G."/>
            <person name="Di Pietro A."/>
            <person name="Walton J.D."/>
            <person name="Ma L.-J."/>
            <person name="Baker S.E."/>
            <person name="Rep M."/>
            <person name="Adam G."/>
            <person name="Antoniw J."/>
            <person name="Baldwin T."/>
            <person name="Calvo S.E."/>
            <person name="Chang Y.-L."/>
            <person name="DeCaprio D."/>
            <person name="Gale L.R."/>
            <person name="Gnerre S."/>
            <person name="Goswami R.S."/>
            <person name="Hammond-Kosack K."/>
            <person name="Harris L.J."/>
            <person name="Hilburn K."/>
            <person name="Kennell J.C."/>
            <person name="Kroken S."/>
            <person name="Magnuson J.K."/>
            <person name="Mannhaupt G."/>
            <person name="Mauceli E.W."/>
            <person name="Mewes H.-W."/>
            <person name="Mitterbauer R."/>
            <person name="Muehlbauer G."/>
            <person name="Muensterkoetter M."/>
            <person name="Nelson D."/>
            <person name="O'Donnell K."/>
            <person name="Ouellet T."/>
            <person name="Qi W."/>
            <person name="Quesneville H."/>
            <person name="Roncero M.I.G."/>
            <person name="Seong K.-Y."/>
            <person name="Tetko I.V."/>
            <person name="Urban M."/>
            <person name="Waalwijk C."/>
            <person name="Ward T.J."/>
            <person name="Yao J."/>
            <person name="Birren B.W."/>
            <person name="Kistler H.C."/>
        </authorList>
    </citation>
    <scope>NUCLEOTIDE SEQUENCE [LARGE SCALE GENOMIC DNA]</scope>
    <source>
        <strain>ATCC MYA-4620 / CBS 123657 / FGSC 9075 / NRRL 31084 / PH-1</strain>
    </source>
</reference>
<reference key="2">
    <citation type="journal article" date="2010" name="Nature">
        <title>Comparative genomics reveals mobile pathogenicity chromosomes in Fusarium.</title>
        <authorList>
            <person name="Ma L.-J."/>
            <person name="van der Does H.C."/>
            <person name="Borkovich K.A."/>
            <person name="Coleman J.J."/>
            <person name="Daboussi M.-J."/>
            <person name="Di Pietro A."/>
            <person name="Dufresne M."/>
            <person name="Freitag M."/>
            <person name="Grabherr M."/>
            <person name="Henrissat B."/>
            <person name="Houterman P.M."/>
            <person name="Kang S."/>
            <person name="Shim W.-B."/>
            <person name="Woloshuk C."/>
            <person name="Xie X."/>
            <person name="Xu J.-R."/>
            <person name="Antoniw J."/>
            <person name="Baker S.E."/>
            <person name="Bluhm B.H."/>
            <person name="Breakspear A."/>
            <person name="Brown D.W."/>
            <person name="Butchko R.A.E."/>
            <person name="Chapman S."/>
            <person name="Coulson R."/>
            <person name="Coutinho P.M."/>
            <person name="Danchin E.G.J."/>
            <person name="Diener A."/>
            <person name="Gale L.R."/>
            <person name="Gardiner D.M."/>
            <person name="Goff S."/>
            <person name="Hammond-Kosack K.E."/>
            <person name="Hilburn K."/>
            <person name="Hua-Van A."/>
            <person name="Jonkers W."/>
            <person name="Kazan K."/>
            <person name="Kodira C.D."/>
            <person name="Koehrsen M."/>
            <person name="Kumar L."/>
            <person name="Lee Y.-H."/>
            <person name="Li L."/>
            <person name="Manners J.M."/>
            <person name="Miranda-Saavedra D."/>
            <person name="Mukherjee M."/>
            <person name="Park G."/>
            <person name="Park J."/>
            <person name="Park S.-Y."/>
            <person name="Proctor R.H."/>
            <person name="Regev A."/>
            <person name="Ruiz-Roldan M.C."/>
            <person name="Sain D."/>
            <person name="Sakthikumar S."/>
            <person name="Sykes S."/>
            <person name="Schwartz D.C."/>
            <person name="Turgeon B.G."/>
            <person name="Wapinski I."/>
            <person name="Yoder O."/>
            <person name="Young S."/>
            <person name="Zeng Q."/>
            <person name="Zhou S."/>
            <person name="Galagan J."/>
            <person name="Cuomo C.A."/>
            <person name="Kistler H.C."/>
            <person name="Rep M."/>
        </authorList>
    </citation>
    <scope>GENOME REANNOTATION</scope>
    <source>
        <strain>ATCC MYA-4620 / CBS 123657 / FGSC 9075 / NRRL 31084 / PH-1</strain>
    </source>
</reference>
<reference key="3">
    <citation type="journal article" date="2015" name="BMC Genomics">
        <title>The completed genome sequence of the pathogenic ascomycete fungus Fusarium graminearum.</title>
        <authorList>
            <person name="King R."/>
            <person name="Urban M."/>
            <person name="Hammond-Kosack M.C.U."/>
            <person name="Hassani-Pak K."/>
            <person name="Hammond-Kosack K.E."/>
        </authorList>
    </citation>
    <scope>NUCLEOTIDE SEQUENCE [LARGE SCALE GENOMIC DNA]</scope>
    <source>
        <strain>ATCC MYA-4620 / CBS 123657 / FGSC 9075 / NRRL 31084 / PH-1</strain>
    </source>
</reference>
<protein>
    <recommendedName>
        <fullName>Crossover junction endonuclease MUS81</fullName>
        <ecNumber>3.1.22.-</ecNumber>
    </recommendedName>
</protein>
<name>MUS81_GIBZE</name>
<gene>
    <name type="primary">MUS81</name>
    <name type="ORF">FGRRES_01132</name>
    <name type="ORF">FGSG_01132</name>
</gene>